<gene>
    <name type="primary">IFNG</name>
</gene>
<name>IFNG_MACNE</name>
<protein>
    <recommendedName>
        <fullName>Interferon gamma</fullName>
        <shortName>IFN-gamma</shortName>
    </recommendedName>
</protein>
<keyword id="KW-0051">Antiviral defense</keyword>
<keyword id="KW-0202">Cytokine</keyword>
<keyword id="KW-0325">Glycoprotein</keyword>
<keyword id="KW-0341">Growth regulation</keyword>
<keyword id="KW-0873">Pyrrolidone carboxylic acid</keyword>
<keyword id="KW-1185">Reference proteome</keyword>
<keyword id="KW-0964">Secreted</keyword>
<keyword id="KW-0732">Signal</keyword>
<organism>
    <name type="scientific">Macaca nemestrina</name>
    <name type="common">Pig-tailed macaque</name>
    <dbReference type="NCBI Taxonomy" id="9545"/>
    <lineage>
        <taxon>Eukaryota</taxon>
        <taxon>Metazoa</taxon>
        <taxon>Chordata</taxon>
        <taxon>Craniata</taxon>
        <taxon>Vertebrata</taxon>
        <taxon>Euteleostomi</taxon>
        <taxon>Mammalia</taxon>
        <taxon>Eutheria</taxon>
        <taxon>Euarchontoglires</taxon>
        <taxon>Primates</taxon>
        <taxon>Haplorrhini</taxon>
        <taxon>Catarrhini</taxon>
        <taxon>Cercopithecidae</taxon>
        <taxon>Cercopithecinae</taxon>
        <taxon>Macaca</taxon>
    </lineage>
</organism>
<accession>P63311</accession>
<accession>P42163</accession>
<accession>P42164</accession>
<evidence type="ECO:0000250" key="1"/>
<evidence type="ECO:0000250" key="2">
    <source>
        <dbReference type="UniProtKB" id="P01579"/>
    </source>
</evidence>
<evidence type="ECO:0000250" key="3">
    <source>
        <dbReference type="UniProtKB" id="P01580"/>
    </source>
</evidence>
<evidence type="ECO:0000255" key="4"/>
<evidence type="ECO:0000305" key="5"/>
<feature type="signal peptide" evidence="1">
    <location>
        <begin position="1"/>
        <end position="23"/>
    </location>
</feature>
<feature type="chain" id="PRO_0000016448" description="Interferon gamma">
    <location>
        <begin position="24"/>
        <end position="165"/>
    </location>
</feature>
<feature type="modified residue" description="Pyrrolidone carboxylic acid" evidence="2">
    <location>
        <position position="24"/>
    </location>
</feature>
<feature type="glycosylation site" description="N-linked (GlcNAc...) asparagine" evidence="4">
    <location>
        <position position="48"/>
    </location>
</feature>
<feature type="glycosylation site" description="N-linked (GlcNAc...) asparagine" evidence="4">
    <location>
        <position position="120"/>
    </location>
</feature>
<reference key="1">
    <citation type="journal article" date="1995" name="J. Immunol.">
        <title>Comparative sequence analysis of cytokine genes from human and nonhuman primates.</title>
        <authorList>
            <person name="Villinger F.J."/>
            <person name="Brar S.S."/>
            <person name="Mayne A.E."/>
            <person name="Chikkala N."/>
            <person name="Ansari A.A."/>
        </authorList>
    </citation>
    <scope>NUCLEOTIDE SEQUENCE [MRNA]</scope>
</reference>
<dbReference type="EMBL" id="L26026">
    <property type="protein sequence ID" value="AAA99974.1"/>
    <property type="molecule type" value="mRNA"/>
</dbReference>
<dbReference type="RefSeq" id="XP_011725531.1">
    <property type="nucleotide sequence ID" value="XM_011727229.1"/>
</dbReference>
<dbReference type="SMR" id="P63311"/>
<dbReference type="STRING" id="9545.ENSMNEP00000045088"/>
<dbReference type="GlyCosmos" id="P63311">
    <property type="glycosylation" value="2 sites, No reported glycans"/>
</dbReference>
<dbReference type="Ensembl" id="ENSMNET00000069599.1">
    <property type="protein sequence ID" value="ENSMNEP00000045088.1"/>
    <property type="gene ID" value="ENSMNEG00000045091.1"/>
</dbReference>
<dbReference type="GeneID" id="105473416"/>
<dbReference type="KEGG" id="mni:105473416"/>
<dbReference type="GeneTree" id="ENSGT00390000007831"/>
<dbReference type="OMA" id="QIVSMYL"/>
<dbReference type="OrthoDB" id="3094at314294"/>
<dbReference type="Proteomes" id="UP000233120">
    <property type="component" value="Unassembled WGS sequence"/>
</dbReference>
<dbReference type="GO" id="GO:0005615">
    <property type="term" value="C:extracellular space"/>
    <property type="evidence" value="ECO:0007669"/>
    <property type="project" value="UniProtKB-KW"/>
</dbReference>
<dbReference type="GO" id="GO:0005125">
    <property type="term" value="F:cytokine activity"/>
    <property type="evidence" value="ECO:0007669"/>
    <property type="project" value="UniProtKB-KW"/>
</dbReference>
<dbReference type="GO" id="GO:0005133">
    <property type="term" value="F:type II interferon receptor binding"/>
    <property type="evidence" value="ECO:0007669"/>
    <property type="project" value="InterPro"/>
</dbReference>
<dbReference type="GO" id="GO:0002250">
    <property type="term" value="P:adaptive immune response"/>
    <property type="evidence" value="ECO:0007669"/>
    <property type="project" value="TreeGrafter"/>
</dbReference>
<dbReference type="GO" id="GO:0048143">
    <property type="term" value="P:astrocyte activation"/>
    <property type="evidence" value="ECO:0007669"/>
    <property type="project" value="Ensembl"/>
</dbReference>
<dbReference type="GO" id="GO:0097696">
    <property type="term" value="P:cell surface receptor signaling pathway via STAT"/>
    <property type="evidence" value="ECO:0007669"/>
    <property type="project" value="Ensembl"/>
</dbReference>
<dbReference type="GO" id="GO:0051607">
    <property type="term" value="P:defense response to virus"/>
    <property type="evidence" value="ECO:0007669"/>
    <property type="project" value="UniProtKB-KW"/>
</dbReference>
<dbReference type="GO" id="GO:0097191">
    <property type="term" value="P:extrinsic apoptotic signaling pathway"/>
    <property type="evidence" value="ECO:0007669"/>
    <property type="project" value="Ensembl"/>
</dbReference>
<dbReference type="GO" id="GO:0038096">
    <property type="term" value="P:Fc-gamma receptor signaling pathway involved in phagocytosis"/>
    <property type="evidence" value="ECO:0007669"/>
    <property type="project" value="Ensembl"/>
</dbReference>
<dbReference type="GO" id="GO:0006959">
    <property type="term" value="P:humoral immune response"/>
    <property type="evidence" value="ECO:0007669"/>
    <property type="project" value="TreeGrafter"/>
</dbReference>
<dbReference type="GO" id="GO:0002281">
    <property type="term" value="P:macrophage activation involved in immune response"/>
    <property type="evidence" value="ECO:0007669"/>
    <property type="project" value="Ensembl"/>
</dbReference>
<dbReference type="GO" id="GO:0030225">
    <property type="term" value="P:macrophage differentiation"/>
    <property type="evidence" value="ECO:0007669"/>
    <property type="project" value="Ensembl"/>
</dbReference>
<dbReference type="GO" id="GO:0001774">
    <property type="term" value="P:microglial cell activation"/>
    <property type="evidence" value="ECO:0007669"/>
    <property type="project" value="Ensembl"/>
</dbReference>
<dbReference type="GO" id="GO:0045892">
    <property type="term" value="P:negative regulation of DNA-templated transcription"/>
    <property type="evidence" value="ECO:0007669"/>
    <property type="project" value="Ensembl"/>
</dbReference>
<dbReference type="GO" id="GO:0032700">
    <property type="term" value="P:negative regulation of interleukin-17 production"/>
    <property type="evidence" value="ECO:0007669"/>
    <property type="project" value="Ensembl"/>
</dbReference>
<dbReference type="GO" id="GO:0048662">
    <property type="term" value="P:negative regulation of smooth muscle cell proliferation"/>
    <property type="evidence" value="ECO:0007669"/>
    <property type="project" value="Ensembl"/>
</dbReference>
<dbReference type="GO" id="GO:1902004">
    <property type="term" value="P:positive regulation of amyloid-beta formation"/>
    <property type="evidence" value="ECO:0007669"/>
    <property type="project" value="Ensembl"/>
</dbReference>
<dbReference type="GO" id="GO:0010508">
    <property type="term" value="P:positive regulation of autophagy"/>
    <property type="evidence" value="ECO:0000250"/>
    <property type="project" value="UniProtKB"/>
</dbReference>
<dbReference type="GO" id="GO:0032834">
    <property type="term" value="P:positive regulation of CD4-positive, CD25-positive, alpha-beta regulatory T cell differentiation involved in immune response"/>
    <property type="evidence" value="ECO:0007669"/>
    <property type="project" value="Ensembl"/>
</dbReference>
<dbReference type="GO" id="GO:0032722">
    <property type="term" value="P:positive regulation of chemokine production"/>
    <property type="evidence" value="ECO:0007669"/>
    <property type="project" value="Ensembl"/>
</dbReference>
<dbReference type="GO" id="GO:0010634">
    <property type="term" value="P:positive regulation of epithelial cell migration"/>
    <property type="evidence" value="ECO:0007669"/>
    <property type="project" value="Ensembl"/>
</dbReference>
<dbReference type="GO" id="GO:0060552">
    <property type="term" value="P:positive regulation of fructose 1,6-bisphosphate metabolic process"/>
    <property type="evidence" value="ECO:0007669"/>
    <property type="project" value="Ensembl"/>
</dbReference>
<dbReference type="GO" id="GO:0050729">
    <property type="term" value="P:positive regulation of inflammatory response"/>
    <property type="evidence" value="ECO:0007669"/>
    <property type="project" value="Ensembl"/>
</dbReference>
<dbReference type="GO" id="GO:0032735">
    <property type="term" value="P:positive regulation of interleukin-12 production"/>
    <property type="evidence" value="ECO:0007669"/>
    <property type="project" value="Ensembl"/>
</dbReference>
<dbReference type="GO" id="GO:0032747">
    <property type="term" value="P:positive regulation of interleukin-23 production"/>
    <property type="evidence" value="ECO:0007669"/>
    <property type="project" value="Ensembl"/>
</dbReference>
<dbReference type="GO" id="GO:0032755">
    <property type="term" value="P:positive regulation of interleukin-6 production"/>
    <property type="evidence" value="ECO:0007669"/>
    <property type="project" value="Ensembl"/>
</dbReference>
<dbReference type="GO" id="GO:0051044">
    <property type="term" value="P:positive regulation of membrane protein ectodomain proteolysis"/>
    <property type="evidence" value="ECO:0007669"/>
    <property type="project" value="Ensembl"/>
</dbReference>
<dbReference type="GO" id="GO:0050769">
    <property type="term" value="P:positive regulation of neurogenesis"/>
    <property type="evidence" value="ECO:0007669"/>
    <property type="project" value="Ensembl"/>
</dbReference>
<dbReference type="GO" id="GO:0045429">
    <property type="term" value="P:positive regulation of nitric oxide biosynthetic process"/>
    <property type="evidence" value="ECO:0007669"/>
    <property type="project" value="Ensembl"/>
</dbReference>
<dbReference type="GO" id="GO:0045672">
    <property type="term" value="P:positive regulation of osteoclast differentiation"/>
    <property type="evidence" value="ECO:0007669"/>
    <property type="project" value="Ensembl"/>
</dbReference>
<dbReference type="GO" id="GO:0042307">
    <property type="term" value="P:positive regulation of protein import into nucleus"/>
    <property type="evidence" value="ECO:0007669"/>
    <property type="project" value="Ensembl"/>
</dbReference>
<dbReference type="GO" id="GO:0031334">
    <property type="term" value="P:positive regulation of protein-containing complex assembly"/>
    <property type="evidence" value="ECO:0007669"/>
    <property type="project" value="Ensembl"/>
</dbReference>
<dbReference type="GO" id="GO:0034393">
    <property type="term" value="P:positive regulation of smooth muscle cell apoptotic process"/>
    <property type="evidence" value="ECO:0007669"/>
    <property type="project" value="Ensembl"/>
</dbReference>
<dbReference type="GO" id="GO:2000309">
    <property type="term" value="P:positive regulation of tumor necrosis factor (ligand) superfamily member 11 production"/>
    <property type="evidence" value="ECO:0007669"/>
    <property type="project" value="Ensembl"/>
</dbReference>
<dbReference type="GO" id="GO:0060557">
    <property type="term" value="P:positive regulation of vitamin D biosynthetic process"/>
    <property type="evidence" value="ECO:0007669"/>
    <property type="project" value="Ensembl"/>
</dbReference>
<dbReference type="GO" id="GO:0050796">
    <property type="term" value="P:regulation of insulin secretion"/>
    <property type="evidence" value="ECO:0007669"/>
    <property type="project" value="Ensembl"/>
</dbReference>
<dbReference type="GO" id="GO:0060333">
    <property type="term" value="P:type II interferon-mediated signaling pathway"/>
    <property type="evidence" value="ECO:0007669"/>
    <property type="project" value="Ensembl"/>
</dbReference>
<dbReference type="GO" id="GO:0038196">
    <property type="term" value="P:type III interferon-mediated signaling pathway"/>
    <property type="evidence" value="ECO:0007669"/>
    <property type="project" value="Ensembl"/>
</dbReference>
<dbReference type="FunFam" id="1.20.1250.10:FF:000007">
    <property type="entry name" value="Interferon gamma"/>
    <property type="match status" value="1"/>
</dbReference>
<dbReference type="Gene3D" id="1.20.1250.10">
    <property type="match status" value="1"/>
</dbReference>
<dbReference type="InterPro" id="IPR009079">
    <property type="entry name" value="4_helix_cytokine-like_core"/>
</dbReference>
<dbReference type="InterPro" id="IPR002069">
    <property type="entry name" value="Interferon_gamma"/>
</dbReference>
<dbReference type="PANTHER" id="PTHR11419">
    <property type="entry name" value="INTERFERON GAMMA"/>
    <property type="match status" value="1"/>
</dbReference>
<dbReference type="PANTHER" id="PTHR11419:SF0">
    <property type="entry name" value="INTERFERON GAMMA"/>
    <property type="match status" value="1"/>
</dbReference>
<dbReference type="Pfam" id="PF00714">
    <property type="entry name" value="IFN-gamma"/>
    <property type="match status" value="1"/>
</dbReference>
<dbReference type="PIRSF" id="PIRSF001936">
    <property type="entry name" value="IFN-gamma"/>
    <property type="match status" value="1"/>
</dbReference>
<dbReference type="SUPFAM" id="SSF47266">
    <property type="entry name" value="4-helical cytokines"/>
    <property type="match status" value="1"/>
</dbReference>
<proteinExistence type="evidence at transcript level"/>
<sequence>MKYTSYILAFQLCIVLGSLGCYCQDPYVKEAENLKKYFNAGDPDVADNGTLFLDILRNWKEESDRKIMQSQIVSFYFKLFKNFKDDQRIQKSVETIKEDINVKFFNSNKKKRDDFEKLTNYSVTDSNVQRKAVHELIQVMAELSPAAKIGKRKRSQMFRGRRASQ</sequence>
<comment type="function">
    <text evidence="2 3">Type II interferon produced by immune cells such as T-cells and NK cells that plays crucial roles in antimicrobial, antiviral, and antitumor responses by activating effector immune cells and enhancing antigen presentation. Primarily signals through the JAK-STAT pathway after interaction with its receptor IFNGR1 to affect gene regulation. Upon IFNG binding, IFNGR1 intracellular domain opens out to allow association of downstream signaling components JAK2, JAK1 and STAT1, leading to STAT1 activation, nuclear translocation and transcription of IFNG-regulated genes. Many of the induced genes are transcription factors such as IRF1 that are able to further drive regulation of a next wave of transcription. Plays a role in class I antigen presentation pathway by inducing a replacement of catalytic proteasome subunits with immunoproteasome subunits. In turn, increases the quantity, quality, and repertoire of peptides for class I MHC loading. Increases the efficiency of peptide generation also by inducing the expression of activator PA28 that associates with the proteasome and alters its proteolytic cleavage preference. Up-regulates as well MHC II complexes on the cell surface by promoting expression of several key molecules such as cathepsins B/CTSB, H/CTSH, and L/CTSL (By similarity). Participates in the regulation of hematopoietic stem cells during development and under homeostatic conditions by affecting their development, quiescence, and differentiation (By similarity).</text>
</comment>
<comment type="subunit">
    <text evidence="2">Homodimer. Interacts with IFNGR1 (via extracellular domain); this interaction promotes IFNGR1 dimerization.</text>
</comment>
<comment type="subcellular location">
    <subcellularLocation>
        <location evidence="2">Secreted</location>
    </subcellularLocation>
</comment>
<comment type="tissue specificity">
    <text>Released primarily from activated T lymphocytes.</text>
</comment>
<comment type="similarity">
    <text evidence="5">Belongs to the type II (or gamma) interferon family.</text>
</comment>